<reference key="1">
    <citation type="journal article" date="2005" name="Nature">
        <title>The map-based sequence of the rice genome.</title>
        <authorList>
            <consortium name="International rice genome sequencing project (IRGSP)"/>
        </authorList>
    </citation>
    <scope>NUCLEOTIDE SEQUENCE [LARGE SCALE GENOMIC DNA]</scope>
    <source>
        <strain>cv. Nipponbare</strain>
    </source>
</reference>
<reference key="2">
    <citation type="journal article" date="2008" name="Nucleic Acids Res.">
        <title>The rice annotation project database (RAP-DB): 2008 update.</title>
        <authorList>
            <consortium name="The rice annotation project (RAP)"/>
        </authorList>
    </citation>
    <scope>GENOME REANNOTATION</scope>
    <source>
        <strain>cv. Nipponbare</strain>
    </source>
</reference>
<reference key="3">
    <citation type="journal article" date="2013" name="Rice">
        <title>Improvement of the Oryza sativa Nipponbare reference genome using next generation sequence and optical map data.</title>
        <authorList>
            <person name="Kawahara Y."/>
            <person name="de la Bastide M."/>
            <person name="Hamilton J.P."/>
            <person name="Kanamori H."/>
            <person name="McCombie W.R."/>
            <person name="Ouyang S."/>
            <person name="Schwartz D.C."/>
            <person name="Tanaka T."/>
            <person name="Wu J."/>
            <person name="Zhou S."/>
            <person name="Childs K.L."/>
            <person name="Davidson R.M."/>
            <person name="Lin H."/>
            <person name="Quesada-Ocampo L."/>
            <person name="Vaillancourt B."/>
            <person name="Sakai H."/>
            <person name="Lee S.S."/>
            <person name="Kim J."/>
            <person name="Numa H."/>
            <person name="Itoh T."/>
            <person name="Buell C.R."/>
            <person name="Matsumoto T."/>
        </authorList>
    </citation>
    <scope>GENOME REANNOTATION</scope>
    <source>
        <strain>cv. Nipponbare</strain>
    </source>
</reference>
<reference key="4">
    <citation type="journal article" date="2005" name="PLoS Biol.">
        <title>The genomes of Oryza sativa: a history of duplications.</title>
        <authorList>
            <person name="Yu J."/>
            <person name="Wang J."/>
            <person name="Lin W."/>
            <person name="Li S."/>
            <person name="Li H."/>
            <person name="Zhou J."/>
            <person name="Ni P."/>
            <person name="Dong W."/>
            <person name="Hu S."/>
            <person name="Zeng C."/>
            <person name="Zhang J."/>
            <person name="Zhang Y."/>
            <person name="Li R."/>
            <person name="Xu Z."/>
            <person name="Li S."/>
            <person name="Li X."/>
            <person name="Zheng H."/>
            <person name="Cong L."/>
            <person name="Lin L."/>
            <person name="Yin J."/>
            <person name="Geng J."/>
            <person name="Li G."/>
            <person name="Shi J."/>
            <person name="Liu J."/>
            <person name="Lv H."/>
            <person name="Li J."/>
            <person name="Wang J."/>
            <person name="Deng Y."/>
            <person name="Ran L."/>
            <person name="Shi X."/>
            <person name="Wang X."/>
            <person name="Wu Q."/>
            <person name="Li C."/>
            <person name="Ren X."/>
            <person name="Wang J."/>
            <person name="Wang X."/>
            <person name="Li D."/>
            <person name="Liu D."/>
            <person name="Zhang X."/>
            <person name="Ji Z."/>
            <person name="Zhao W."/>
            <person name="Sun Y."/>
            <person name="Zhang Z."/>
            <person name="Bao J."/>
            <person name="Han Y."/>
            <person name="Dong L."/>
            <person name="Ji J."/>
            <person name="Chen P."/>
            <person name="Wu S."/>
            <person name="Liu J."/>
            <person name="Xiao Y."/>
            <person name="Bu D."/>
            <person name="Tan J."/>
            <person name="Yang L."/>
            <person name="Ye C."/>
            <person name="Zhang J."/>
            <person name="Xu J."/>
            <person name="Zhou Y."/>
            <person name="Yu Y."/>
            <person name="Zhang B."/>
            <person name="Zhuang S."/>
            <person name="Wei H."/>
            <person name="Liu B."/>
            <person name="Lei M."/>
            <person name="Yu H."/>
            <person name="Li Y."/>
            <person name="Xu H."/>
            <person name="Wei S."/>
            <person name="He X."/>
            <person name="Fang L."/>
            <person name="Zhang Z."/>
            <person name="Zhang Y."/>
            <person name="Huang X."/>
            <person name="Su Z."/>
            <person name="Tong W."/>
            <person name="Li J."/>
            <person name="Tong Z."/>
            <person name="Li S."/>
            <person name="Ye J."/>
            <person name="Wang L."/>
            <person name="Fang L."/>
            <person name="Lei T."/>
            <person name="Chen C.-S."/>
            <person name="Chen H.-C."/>
            <person name="Xu Z."/>
            <person name="Li H."/>
            <person name="Huang H."/>
            <person name="Zhang F."/>
            <person name="Xu H."/>
            <person name="Li N."/>
            <person name="Zhao C."/>
            <person name="Li S."/>
            <person name="Dong L."/>
            <person name="Huang Y."/>
            <person name="Li L."/>
            <person name="Xi Y."/>
            <person name="Qi Q."/>
            <person name="Li W."/>
            <person name="Zhang B."/>
            <person name="Hu W."/>
            <person name="Zhang Y."/>
            <person name="Tian X."/>
            <person name="Jiao Y."/>
            <person name="Liang X."/>
            <person name="Jin J."/>
            <person name="Gao L."/>
            <person name="Zheng W."/>
            <person name="Hao B."/>
            <person name="Liu S.-M."/>
            <person name="Wang W."/>
            <person name="Yuan L."/>
            <person name="Cao M."/>
            <person name="McDermott J."/>
            <person name="Samudrala R."/>
            <person name="Wang J."/>
            <person name="Wong G.K.-S."/>
            <person name="Yang H."/>
        </authorList>
    </citation>
    <scope>NUCLEOTIDE SEQUENCE [LARGE SCALE GENOMIC DNA]</scope>
    <source>
        <strain>cv. Nipponbare</strain>
    </source>
</reference>
<name>LAC14_ORYSJ</name>
<comment type="function">
    <text evidence="1">Lignin degradation and detoxification of lignin-derived products.</text>
</comment>
<comment type="catalytic activity">
    <reaction>
        <text>4 hydroquinone + O2 = 4 benzosemiquinone + 2 H2O</text>
        <dbReference type="Rhea" id="RHEA:11276"/>
        <dbReference type="ChEBI" id="CHEBI:15377"/>
        <dbReference type="ChEBI" id="CHEBI:15379"/>
        <dbReference type="ChEBI" id="CHEBI:17594"/>
        <dbReference type="ChEBI" id="CHEBI:17977"/>
        <dbReference type="EC" id="1.10.3.2"/>
    </reaction>
</comment>
<comment type="cofactor">
    <cofactor evidence="1">
        <name>Cu cation</name>
        <dbReference type="ChEBI" id="CHEBI:23378"/>
    </cofactor>
    <text evidence="1">Binds 4 Cu cations per monomer.</text>
</comment>
<comment type="subcellular location">
    <subcellularLocation>
        <location evidence="3">Secreted</location>
        <location evidence="3">Extracellular space</location>
        <location evidence="3">Apoplast</location>
    </subcellularLocation>
</comment>
<comment type="similarity">
    <text evidence="3">Belongs to the multicopper oxidase family.</text>
</comment>
<accession>Q69L99</accession>
<accession>C7J548</accession>
<evidence type="ECO:0000250" key="1"/>
<evidence type="ECO:0000255" key="2"/>
<evidence type="ECO:0000305" key="3"/>
<sequence length="583" mass="63802">MAPSLGSGSTRILLIVSLLLCLRQQAVVDAAIVEHTFHVGNLTVERLGQRQVITAVNGQFPGPKVEARNGDTLLVRVVNNSPYNITIHWHGVLQRLSAWADGPAMVTQCPILPGSGAGSSYTYRFNVTGQEGTLWWHAHVSFLRATVYGALLIRPRPGVPYPFPAPHAEHTLLLGEWWNASATLVDVERQAFLTGGQPANSVALTINGMPGLSHAHKEMHHLRVARGNTYLLRLVNAALNYQLFFKVAAHNFTVVAVDACYTDPYHTDVIVIAPGQTVDALMHAGAAPGRRYYVAAQVYQSIANATYSATARALLRYDDDAKDAAKTIIMSPRMPVLNDSATAQRFYGSLTGLLRDGKPTVPQRVDTRMVVTYGLAIAPCLPAQTLCNRTRGSLAASMNNVSFQLPATMSLLEASRSRSSGVYTRDFPDRPPVMFDFTNAAAVNRNMSLMVTSKGTRVKALRYNETVEVVLQNTAVLGTENHPLHLHGFNFYVLAQGTGNYYYLIRKKKIRKNLVNPQQRNTIAVPPGGWAVIRFTADNPGVWLMHCHLEAHLPFGLAMAFDVQDGPTPDAMLPPPPNDYPPC</sequence>
<dbReference type="EC" id="1.10.3.2"/>
<dbReference type="EMBL" id="AP005869">
    <property type="protein sequence ID" value="BAD31823.1"/>
    <property type="molecule type" value="Genomic_DNA"/>
</dbReference>
<dbReference type="EMBL" id="AP008213">
    <property type="protein sequence ID" value="BAH93742.1"/>
    <property type="molecule type" value="Genomic_DNA"/>
</dbReference>
<dbReference type="EMBL" id="AP014963">
    <property type="protein sequence ID" value="BAS99676.1"/>
    <property type="molecule type" value="Genomic_DNA"/>
</dbReference>
<dbReference type="EMBL" id="CM000144">
    <property type="status" value="NOT_ANNOTATED_CDS"/>
    <property type="molecule type" value="Genomic_DNA"/>
</dbReference>
<dbReference type="SMR" id="Q69L99"/>
<dbReference type="STRING" id="39947.Q69L99"/>
<dbReference type="GlyCosmos" id="Q69L99">
    <property type="glycosylation" value="11 sites, No reported glycans"/>
</dbReference>
<dbReference type="PaxDb" id="39947-Q69L99"/>
<dbReference type="EnsemblPlants" id="Os07t0101000-00">
    <property type="protein sequence ID" value="Os07t0101000-00"/>
    <property type="gene ID" value="Os07g0101000"/>
</dbReference>
<dbReference type="GeneID" id="9272497"/>
<dbReference type="Gramene" id="Os07t0101000-00">
    <property type="protein sequence ID" value="Os07t0101000-00"/>
    <property type="gene ID" value="Os07g0101000"/>
</dbReference>
<dbReference type="KEGG" id="dosa:Os07g0101000"/>
<dbReference type="KEGG" id="osa:9272497"/>
<dbReference type="eggNOG" id="KOG1263">
    <property type="taxonomic scope" value="Eukaryota"/>
</dbReference>
<dbReference type="HOGENOM" id="CLU_006504_6_3_1"/>
<dbReference type="InParanoid" id="Q69L99"/>
<dbReference type="OMA" id="IFHLHGY"/>
<dbReference type="OrthoDB" id="2121828at2759"/>
<dbReference type="Proteomes" id="UP000000763">
    <property type="component" value="Chromosome 7"/>
</dbReference>
<dbReference type="Proteomes" id="UP000007752">
    <property type="component" value="Chromosome 7"/>
</dbReference>
<dbReference type="Proteomes" id="UP000059680">
    <property type="component" value="Chromosome 7"/>
</dbReference>
<dbReference type="GO" id="GO:0048046">
    <property type="term" value="C:apoplast"/>
    <property type="evidence" value="ECO:0007669"/>
    <property type="project" value="UniProtKB-SubCell"/>
</dbReference>
<dbReference type="GO" id="GO:0005507">
    <property type="term" value="F:copper ion binding"/>
    <property type="evidence" value="ECO:0007669"/>
    <property type="project" value="InterPro"/>
</dbReference>
<dbReference type="GO" id="GO:0052716">
    <property type="term" value="F:hydroquinone:oxygen oxidoreductase activity"/>
    <property type="evidence" value="ECO:0007669"/>
    <property type="project" value="UniProtKB-EC"/>
</dbReference>
<dbReference type="GO" id="GO:0016491">
    <property type="term" value="F:oxidoreductase activity"/>
    <property type="evidence" value="ECO:0000318"/>
    <property type="project" value="GO_Central"/>
</dbReference>
<dbReference type="GO" id="GO:0046274">
    <property type="term" value="P:lignin catabolic process"/>
    <property type="evidence" value="ECO:0007669"/>
    <property type="project" value="UniProtKB-KW"/>
</dbReference>
<dbReference type="CDD" id="cd13849">
    <property type="entry name" value="CuRO_1_LCC_plant"/>
    <property type="match status" value="1"/>
</dbReference>
<dbReference type="CDD" id="cd13875">
    <property type="entry name" value="CuRO_2_LCC_plant"/>
    <property type="match status" value="1"/>
</dbReference>
<dbReference type="CDD" id="cd13897">
    <property type="entry name" value="CuRO_3_LCC_plant"/>
    <property type="match status" value="1"/>
</dbReference>
<dbReference type="Gene3D" id="2.60.40.420">
    <property type="entry name" value="Cupredoxins - blue copper proteins"/>
    <property type="match status" value="3"/>
</dbReference>
<dbReference type="InterPro" id="IPR011707">
    <property type="entry name" value="Cu-oxidase-like_N"/>
</dbReference>
<dbReference type="InterPro" id="IPR001117">
    <property type="entry name" value="Cu-oxidase_2nd"/>
</dbReference>
<dbReference type="InterPro" id="IPR011706">
    <property type="entry name" value="Cu-oxidase_C"/>
</dbReference>
<dbReference type="InterPro" id="IPR045087">
    <property type="entry name" value="Cu-oxidase_fam"/>
</dbReference>
<dbReference type="InterPro" id="IPR002355">
    <property type="entry name" value="Cu_oxidase_Cu_BS"/>
</dbReference>
<dbReference type="InterPro" id="IPR008972">
    <property type="entry name" value="Cupredoxin"/>
</dbReference>
<dbReference type="InterPro" id="IPR034288">
    <property type="entry name" value="CuRO_1_LCC"/>
</dbReference>
<dbReference type="InterPro" id="IPR034285">
    <property type="entry name" value="CuRO_2_LCC"/>
</dbReference>
<dbReference type="InterPro" id="IPR034289">
    <property type="entry name" value="CuRO_3_LCC"/>
</dbReference>
<dbReference type="InterPro" id="IPR017761">
    <property type="entry name" value="Laccase"/>
</dbReference>
<dbReference type="NCBIfam" id="TIGR03389">
    <property type="entry name" value="laccase"/>
    <property type="match status" value="1"/>
</dbReference>
<dbReference type="PANTHER" id="PTHR11709:SF9">
    <property type="entry name" value="LACCASE-7"/>
    <property type="match status" value="1"/>
</dbReference>
<dbReference type="PANTHER" id="PTHR11709">
    <property type="entry name" value="MULTI-COPPER OXIDASE"/>
    <property type="match status" value="1"/>
</dbReference>
<dbReference type="Pfam" id="PF00394">
    <property type="entry name" value="Cu-oxidase"/>
    <property type="match status" value="1"/>
</dbReference>
<dbReference type="Pfam" id="PF07731">
    <property type="entry name" value="Cu-oxidase_2"/>
    <property type="match status" value="1"/>
</dbReference>
<dbReference type="Pfam" id="PF07732">
    <property type="entry name" value="Cu-oxidase_3"/>
    <property type="match status" value="1"/>
</dbReference>
<dbReference type="SUPFAM" id="SSF49503">
    <property type="entry name" value="Cupredoxins"/>
    <property type="match status" value="3"/>
</dbReference>
<dbReference type="PROSITE" id="PS00080">
    <property type="entry name" value="MULTICOPPER_OXIDASE2"/>
    <property type="match status" value="1"/>
</dbReference>
<feature type="signal peptide" evidence="2">
    <location>
        <begin position="1"/>
        <end position="30"/>
    </location>
</feature>
<feature type="chain" id="PRO_0000291898" description="Laccase-14">
    <location>
        <begin position="31"/>
        <end position="583"/>
    </location>
</feature>
<feature type="domain" description="Plastocyanin-like 1">
    <location>
        <begin position="38"/>
        <end position="158"/>
    </location>
</feature>
<feature type="domain" description="Plastocyanin-like 2">
    <location>
        <begin position="168"/>
        <end position="320"/>
    </location>
</feature>
<feature type="domain" description="Plastocyanin-like 3">
    <location>
        <begin position="426"/>
        <end position="567"/>
    </location>
</feature>
<feature type="binding site" evidence="1">
    <location>
        <position position="88"/>
    </location>
    <ligand>
        <name>Cu cation</name>
        <dbReference type="ChEBI" id="CHEBI:23378"/>
        <label>1</label>
    </ligand>
</feature>
<feature type="binding site" evidence="1">
    <location>
        <position position="90"/>
    </location>
    <ligand>
        <name>Cu cation</name>
        <dbReference type="ChEBI" id="CHEBI:23378"/>
        <label>2</label>
    </ligand>
</feature>
<feature type="binding site" evidence="1">
    <location>
        <position position="137"/>
    </location>
    <ligand>
        <name>Cu cation</name>
        <dbReference type="ChEBI" id="CHEBI:23378"/>
        <label>2</label>
    </ligand>
</feature>
<feature type="binding site" evidence="1">
    <location>
        <position position="139"/>
    </location>
    <ligand>
        <name>Cu cation</name>
        <dbReference type="ChEBI" id="CHEBI:23378"/>
        <label>3</label>
    </ligand>
</feature>
<feature type="binding site" evidence="1">
    <location>
        <position position="482"/>
    </location>
    <ligand>
        <name>Cu cation</name>
        <dbReference type="ChEBI" id="CHEBI:23378"/>
        <label>4</label>
    </ligand>
</feature>
<feature type="binding site" evidence="1">
    <location>
        <position position="485"/>
    </location>
    <ligand>
        <name>Cu cation</name>
        <dbReference type="ChEBI" id="CHEBI:23378"/>
        <label>1</label>
    </ligand>
</feature>
<feature type="binding site" evidence="1">
    <location>
        <position position="487"/>
    </location>
    <ligand>
        <name>Cu cation</name>
        <dbReference type="ChEBI" id="CHEBI:23378"/>
        <label>3</label>
    </ligand>
</feature>
<feature type="binding site" evidence="1">
    <location>
        <position position="546"/>
    </location>
    <ligand>
        <name>Cu cation</name>
        <dbReference type="ChEBI" id="CHEBI:23378"/>
        <label>3</label>
    </ligand>
</feature>
<feature type="binding site" evidence="1">
    <location>
        <position position="547"/>
    </location>
    <ligand>
        <name>Cu cation</name>
        <dbReference type="ChEBI" id="CHEBI:23378"/>
        <label>4</label>
    </ligand>
</feature>
<feature type="binding site" evidence="1">
    <location>
        <position position="548"/>
    </location>
    <ligand>
        <name>Cu cation</name>
        <dbReference type="ChEBI" id="CHEBI:23378"/>
        <label>2</label>
    </ligand>
</feature>
<feature type="binding site" evidence="1">
    <location>
        <position position="552"/>
    </location>
    <ligand>
        <name>Cu cation</name>
        <dbReference type="ChEBI" id="CHEBI:23378"/>
        <label>4</label>
    </ligand>
</feature>
<feature type="glycosylation site" description="N-linked (GlcNAc...) asparagine" evidence="2">
    <location>
        <position position="41"/>
    </location>
</feature>
<feature type="glycosylation site" description="N-linked (GlcNAc...) asparagine" evidence="2">
    <location>
        <position position="84"/>
    </location>
</feature>
<feature type="glycosylation site" description="N-linked (GlcNAc...) asparagine" evidence="2">
    <location>
        <position position="126"/>
    </location>
</feature>
<feature type="glycosylation site" description="N-linked (GlcNAc...) asparagine" evidence="2">
    <location>
        <position position="179"/>
    </location>
</feature>
<feature type="glycosylation site" description="N-linked (GlcNAc...) asparagine" evidence="2">
    <location>
        <position position="251"/>
    </location>
</feature>
<feature type="glycosylation site" description="N-linked (GlcNAc...) asparagine" evidence="2">
    <location>
        <position position="304"/>
    </location>
</feature>
<feature type="glycosylation site" description="N-linked (GlcNAc...) asparagine" evidence="2">
    <location>
        <position position="338"/>
    </location>
</feature>
<feature type="glycosylation site" description="N-linked (GlcNAc...) asparagine" evidence="2">
    <location>
        <position position="388"/>
    </location>
</feature>
<feature type="glycosylation site" description="N-linked (GlcNAc...) asparagine" evidence="2">
    <location>
        <position position="400"/>
    </location>
</feature>
<feature type="glycosylation site" description="N-linked (GlcNAc...) asparagine" evidence="2">
    <location>
        <position position="446"/>
    </location>
</feature>
<feature type="glycosylation site" description="N-linked (GlcNAc...) asparagine" evidence="2">
    <location>
        <position position="464"/>
    </location>
</feature>
<gene>
    <name type="primary">LAC14</name>
    <name type="ordered locus">Os07g0101000</name>
    <name type="ordered locus">LOC_Os07g01110</name>
    <name type="ORF">B1026C12.14</name>
    <name type="ORF">OsJ_021873</name>
</gene>
<proteinExistence type="inferred from homology"/>
<protein>
    <recommendedName>
        <fullName>Laccase-14</fullName>
        <ecNumber>1.10.3.2</ecNumber>
    </recommendedName>
    <alternativeName>
        <fullName>Benzenediol:oxygen oxidoreductase 14</fullName>
    </alternativeName>
    <alternativeName>
        <fullName>Diphenol oxidase 14</fullName>
    </alternativeName>
    <alternativeName>
        <fullName>Urishiol oxidase 14</fullName>
    </alternativeName>
</protein>
<keyword id="KW-0052">Apoplast</keyword>
<keyword id="KW-0186">Copper</keyword>
<keyword id="KW-0325">Glycoprotein</keyword>
<keyword id="KW-0439">Lignin degradation</keyword>
<keyword id="KW-0479">Metal-binding</keyword>
<keyword id="KW-0560">Oxidoreductase</keyword>
<keyword id="KW-1185">Reference proteome</keyword>
<keyword id="KW-0677">Repeat</keyword>
<keyword id="KW-0964">Secreted</keyword>
<keyword id="KW-0732">Signal</keyword>
<organism>
    <name type="scientific">Oryza sativa subsp. japonica</name>
    <name type="common">Rice</name>
    <dbReference type="NCBI Taxonomy" id="39947"/>
    <lineage>
        <taxon>Eukaryota</taxon>
        <taxon>Viridiplantae</taxon>
        <taxon>Streptophyta</taxon>
        <taxon>Embryophyta</taxon>
        <taxon>Tracheophyta</taxon>
        <taxon>Spermatophyta</taxon>
        <taxon>Magnoliopsida</taxon>
        <taxon>Liliopsida</taxon>
        <taxon>Poales</taxon>
        <taxon>Poaceae</taxon>
        <taxon>BOP clade</taxon>
        <taxon>Oryzoideae</taxon>
        <taxon>Oryzeae</taxon>
        <taxon>Oryzinae</taxon>
        <taxon>Oryza</taxon>
        <taxon>Oryza sativa</taxon>
    </lineage>
</organism>